<proteinExistence type="inferred from homology"/>
<reference key="1">
    <citation type="journal article" date="2003" name="Nature">
        <title>The genome of a motile marine Synechococcus.</title>
        <authorList>
            <person name="Palenik B."/>
            <person name="Brahamsha B."/>
            <person name="Larimer F.W."/>
            <person name="Land M.L."/>
            <person name="Hauser L."/>
            <person name="Chain P."/>
            <person name="Lamerdin J.E."/>
            <person name="Regala W."/>
            <person name="Allen E.E."/>
            <person name="McCarren J."/>
            <person name="Paulsen I.T."/>
            <person name="Dufresne A."/>
            <person name="Partensky F."/>
            <person name="Webb E.A."/>
            <person name="Waterbury J."/>
        </authorList>
    </citation>
    <scope>NUCLEOTIDE SEQUENCE [LARGE SCALE GENOMIC DNA]</scope>
    <source>
        <strain>WH8102</strain>
    </source>
</reference>
<organism>
    <name type="scientific">Parasynechococcus marenigrum (strain WH8102)</name>
    <dbReference type="NCBI Taxonomy" id="84588"/>
    <lineage>
        <taxon>Bacteria</taxon>
        <taxon>Bacillati</taxon>
        <taxon>Cyanobacteriota</taxon>
        <taxon>Cyanophyceae</taxon>
        <taxon>Synechococcales</taxon>
        <taxon>Prochlorococcaceae</taxon>
        <taxon>Parasynechococcus</taxon>
        <taxon>Parasynechococcus marenigrum</taxon>
    </lineage>
</organism>
<protein>
    <recommendedName>
        <fullName>Chaperone protein dnaK2</fullName>
    </recommendedName>
    <alternativeName>
        <fullName>HSP70-2</fullName>
    </alternativeName>
    <alternativeName>
        <fullName>Heat shock 70 kDa protein 2</fullName>
    </alternativeName>
    <alternativeName>
        <fullName>Heat shock protein 70-2</fullName>
    </alternativeName>
</protein>
<keyword id="KW-0067">ATP-binding</keyword>
<keyword id="KW-0143">Chaperone</keyword>
<keyword id="KW-0547">Nucleotide-binding</keyword>
<keyword id="KW-0597">Phosphoprotein</keyword>
<keyword id="KW-0346">Stress response</keyword>
<accession>Q7U3C4</accession>
<evidence type="ECO:0000250" key="1"/>
<evidence type="ECO:0000256" key="2">
    <source>
        <dbReference type="SAM" id="MobiDB-lite"/>
    </source>
</evidence>
<evidence type="ECO:0000305" key="3"/>
<sequence>MGKVVGIDLGTTNSCVSVMEGGKPTVIANAEGFRTTPSVVAYTKNQDQLVGQIAKRQAVMNPDNTFYSVKRFIGRRVDEVNEESKEVSYGVEKAGSNVKVKCPVLDKQFAPEEVSAQVLRKLAEDAGKYLGETVTQAVITVPAYFNDSQRQATKDAGKIAGLEVLRIINEPTAAALAYGLDKKSNERILVFDLGGGTFDVSVLEVGDGVFEVLSTSGDTHLGGDDFDKVIVDHLAETFKSNEGIDLRQDKQALQRLTEAAEKAKIELSSATQSEINLPFITATPEGPKHLDLTLTRAKFEELAANLIDRCRIPVEQALKDAKLSSSELDEIVMVGGSTRIPAVLELVKRTTSKDPNQTVNPDEVVAVGAAIQGGVLAGEVKDILLLDVTPLSLGVETLGGVMTKMITRNTTVPTKKTETYSTAVDGQTNVEIHVLQGEREMASDNKSLGTFRLDGIPPAPRGVPQIEVTFDIDANGILSVTAKDKGSGKEQSISITGASTLSDSEVDKMVKDAEANASADKEKREKIDLKNQAETLVYQAEKQMGELGDKVEADAKAKVDEKRTKLQEAINAEDYDAMKTLLEELQQELYTVGASVYQQEGAAAGGAAPGGDAGASAASGGGDASDDVIDAEFTETK</sequence>
<feature type="chain" id="PRO_0000078567" description="Chaperone protein dnaK2">
    <location>
        <begin position="1"/>
        <end position="637"/>
    </location>
</feature>
<feature type="region of interest" description="Disordered" evidence="2">
    <location>
        <begin position="602"/>
        <end position="637"/>
    </location>
</feature>
<feature type="compositionally biased region" description="Gly residues" evidence="2">
    <location>
        <begin position="603"/>
        <end position="623"/>
    </location>
</feature>
<feature type="compositionally biased region" description="Acidic residues" evidence="2">
    <location>
        <begin position="624"/>
        <end position="637"/>
    </location>
</feature>
<feature type="modified residue" description="Phosphothreonine; by autocatalysis" evidence="1">
    <location>
        <position position="197"/>
    </location>
</feature>
<name>DNAK2_PARMW</name>
<gene>
    <name type="primary">dnaK2</name>
    <name type="ordered locus">SYNW2508</name>
</gene>
<comment type="function">
    <text evidence="1">Acts as a chaperone.</text>
</comment>
<comment type="induction">
    <text evidence="1">By stress conditions e.g. heat shock (By similarity).</text>
</comment>
<comment type="similarity">
    <text evidence="3">Belongs to the heat shock protein 70 family.</text>
</comment>
<dbReference type="EMBL" id="BX569695">
    <property type="protein sequence ID" value="CAE09023.1"/>
    <property type="molecule type" value="Genomic_DNA"/>
</dbReference>
<dbReference type="RefSeq" id="WP_011129361.1">
    <property type="nucleotide sequence ID" value="NC_005070.1"/>
</dbReference>
<dbReference type="SMR" id="Q7U3C4"/>
<dbReference type="STRING" id="84588.SYNW2508"/>
<dbReference type="KEGG" id="syw:SYNW2508"/>
<dbReference type="eggNOG" id="COG0443">
    <property type="taxonomic scope" value="Bacteria"/>
</dbReference>
<dbReference type="HOGENOM" id="CLU_005965_2_1_3"/>
<dbReference type="Proteomes" id="UP000001422">
    <property type="component" value="Chromosome"/>
</dbReference>
<dbReference type="GO" id="GO:0005524">
    <property type="term" value="F:ATP binding"/>
    <property type="evidence" value="ECO:0007669"/>
    <property type="project" value="UniProtKB-UniRule"/>
</dbReference>
<dbReference type="GO" id="GO:0140662">
    <property type="term" value="F:ATP-dependent protein folding chaperone"/>
    <property type="evidence" value="ECO:0007669"/>
    <property type="project" value="InterPro"/>
</dbReference>
<dbReference type="GO" id="GO:0051082">
    <property type="term" value="F:unfolded protein binding"/>
    <property type="evidence" value="ECO:0007669"/>
    <property type="project" value="InterPro"/>
</dbReference>
<dbReference type="CDD" id="cd10234">
    <property type="entry name" value="ASKHA_NBD_HSP70_DnaK-like"/>
    <property type="match status" value="1"/>
</dbReference>
<dbReference type="FunFam" id="2.60.34.10:FF:000014">
    <property type="entry name" value="Chaperone protein DnaK HSP70"/>
    <property type="match status" value="1"/>
</dbReference>
<dbReference type="FunFam" id="1.20.1270.10:FF:000001">
    <property type="entry name" value="Molecular chaperone DnaK"/>
    <property type="match status" value="1"/>
</dbReference>
<dbReference type="FunFam" id="3.30.420.40:FF:000004">
    <property type="entry name" value="Molecular chaperone DnaK"/>
    <property type="match status" value="1"/>
</dbReference>
<dbReference type="FunFam" id="3.90.640.10:FF:000003">
    <property type="entry name" value="Molecular chaperone DnaK"/>
    <property type="match status" value="1"/>
</dbReference>
<dbReference type="Gene3D" id="1.20.1270.10">
    <property type="match status" value="1"/>
</dbReference>
<dbReference type="Gene3D" id="3.30.420.40">
    <property type="match status" value="2"/>
</dbReference>
<dbReference type="Gene3D" id="3.90.640.10">
    <property type="entry name" value="Actin, Chain A, domain 4"/>
    <property type="match status" value="1"/>
</dbReference>
<dbReference type="Gene3D" id="2.60.34.10">
    <property type="entry name" value="Substrate Binding Domain Of DNAk, Chain A, domain 1"/>
    <property type="match status" value="1"/>
</dbReference>
<dbReference type="HAMAP" id="MF_00332">
    <property type="entry name" value="DnaK"/>
    <property type="match status" value="1"/>
</dbReference>
<dbReference type="InterPro" id="IPR043129">
    <property type="entry name" value="ATPase_NBD"/>
</dbReference>
<dbReference type="InterPro" id="IPR012725">
    <property type="entry name" value="Chaperone_DnaK"/>
</dbReference>
<dbReference type="InterPro" id="IPR018181">
    <property type="entry name" value="Heat_shock_70_CS"/>
</dbReference>
<dbReference type="InterPro" id="IPR029048">
    <property type="entry name" value="HSP70_C_sf"/>
</dbReference>
<dbReference type="InterPro" id="IPR029047">
    <property type="entry name" value="HSP70_peptide-bd_sf"/>
</dbReference>
<dbReference type="InterPro" id="IPR013126">
    <property type="entry name" value="Hsp_70_fam"/>
</dbReference>
<dbReference type="NCBIfam" id="NF001413">
    <property type="entry name" value="PRK00290.1"/>
    <property type="match status" value="1"/>
</dbReference>
<dbReference type="NCBIfam" id="NF003520">
    <property type="entry name" value="PRK05183.1"/>
    <property type="match status" value="1"/>
</dbReference>
<dbReference type="NCBIfam" id="TIGR02350">
    <property type="entry name" value="prok_dnaK"/>
    <property type="match status" value="1"/>
</dbReference>
<dbReference type="PANTHER" id="PTHR19375">
    <property type="entry name" value="HEAT SHOCK PROTEIN 70KDA"/>
    <property type="match status" value="1"/>
</dbReference>
<dbReference type="Pfam" id="PF00012">
    <property type="entry name" value="HSP70"/>
    <property type="match status" value="1"/>
</dbReference>
<dbReference type="PRINTS" id="PR00301">
    <property type="entry name" value="HEATSHOCK70"/>
</dbReference>
<dbReference type="SUPFAM" id="SSF53067">
    <property type="entry name" value="Actin-like ATPase domain"/>
    <property type="match status" value="2"/>
</dbReference>
<dbReference type="SUPFAM" id="SSF100934">
    <property type="entry name" value="Heat shock protein 70kD (HSP70), C-terminal subdomain"/>
    <property type="match status" value="1"/>
</dbReference>
<dbReference type="SUPFAM" id="SSF100920">
    <property type="entry name" value="Heat shock protein 70kD (HSP70), peptide-binding domain"/>
    <property type="match status" value="1"/>
</dbReference>
<dbReference type="PROSITE" id="PS00297">
    <property type="entry name" value="HSP70_1"/>
    <property type="match status" value="1"/>
</dbReference>
<dbReference type="PROSITE" id="PS00329">
    <property type="entry name" value="HSP70_2"/>
    <property type="match status" value="1"/>
</dbReference>
<dbReference type="PROSITE" id="PS01036">
    <property type="entry name" value="HSP70_3"/>
    <property type="match status" value="1"/>
</dbReference>